<name>RMND1_PONAB</name>
<protein>
    <recommendedName>
        <fullName>Required for meiotic nuclear division protein 1 homolog</fullName>
    </recommendedName>
</protein>
<comment type="function">
    <text evidence="1">Required for mitochondrial translation, possibly by coordinating the assembly or maintenance of the mitochondrial ribosome.</text>
</comment>
<comment type="subunit">
    <text evidence="1">Homooligomer.</text>
</comment>
<comment type="subcellular location">
    <subcellularLocation>
        <location evidence="1">Mitochondrion</location>
    </subcellularLocation>
    <text evidence="1">May be localized in mitochondrial RNA granules.</text>
</comment>
<comment type="similarity">
    <text evidence="3">Belongs to the RMD1/sif2 family.</text>
</comment>
<sequence length="449" mass="51446">MPATLLRAVAGSHRVLSKAHQCRRIGHLMLKPLKEFENTTCSTLAIRQNLDLFLPDKTAGGLNKSQILEMNQKKSDTSMLSPLNAAHYQDEKAHLPTMKSFGTHRRVTHKPDLLDSKWFIKILKRHFSSVSTETLVPKQDFPQMKRPLKASRTRQPSGTNLPVVSVNEDLMHCTAFATADEYHLGNLSQDLASHGYVEVTSLPRDAANILVMGVENSAKEGDPGTIFFFREGAAVFWNVKDKTMKHVMKVLEKHEIQPYEIALVHWENEELNYIKIEGQSKLHRGEIKLNSELDLDDAILEKFAFSNALCLSVKLAIWEASLDKFIESIQSIPEALKAGKKVKLSHEEVMQKIGELFALRHRINLSSDFLITPDFYWDRENLEGLYDKTCQFLSIGRRVKVMNEKLQHCMEPTDLMRNHLNEKRALRLEWMIVILITIEVMFELGRVFF</sequence>
<evidence type="ECO:0000250" key="1">
    <source>
        <dbReference type="UniProtKB" id="Q9NWS8"/>
    </source>
</evidence>
<evidence type="ECO:0000255" key="2"/>
<evidence type="ECO:0000305" key="3"/>
<organism>
    <name type="scientific">Pongo abelii</name>
    <name type="common">Sumatran orangutan</name>
    <name type="synonym">Pongo pygmaeus abelii</name>
    <dbReference type="NCBI Taxonomy" id="9601"/>
    <lineage>
        <taxon>Eukaryota</taxon>
        <taxon>Metazoa</taxon>
        <taxon>Chordata</taxon>
        <taxon>Craniata</taxon>
        <taxon>Vertebrata</taxon>
        <taxon>Euteleostomi</taxon>
        <taxon>Mammalia</taxon>
        <taxon>Eutheria</taxon>
        <taxon>Euarchontoglires</taxon>
        <taxon>Primates</taxon>
        <taxon>Haplorrhini</taxon>
        <taxon>Catarrhini</taxon>
        <taxon>Hominidae</taxon>
        <taxon>Pongo</taxon>
    </lineage>
</organism>
<keyword id="KW-0496">Mitochondrion</keyword>
<keyword id="KW-0648">Protein biosynthesis</keyword>
<keyword id="KW-1185">Reference proteome</keyword>
<keyword id="KW-0809">Transit peptide</keyword>
<accession>Q5RAR5</accession>
<proteinExistence type="evidence at transcript level"/>
<gene>
    <name type="primary">RMND1</name>
</gene>
<reference key="1">
    <citation type="submission" date="2004-11" db="EMBL/GenBank/DDBJ databases">
        <authorList>
            <consortium name="The German cDNA consortium"/>
        </authorList>
    </citation>
    <scope>NUCLEOTIDE SEQUENCE [LARGE SCALE MRNA]</scope>
    <source>
        <tissue>Kidney</tissue>
    </source>
</reference>
<feature type="transit peptide" description="Mitochondrion" evidence="2">
    <location>
        <begin position="1"/>
        <end position="16"/>
    </location>
</feature>
<feature type="chain" id="PRO_0000229733" description="Required for meiotic nuclear division protein 1 homolog">
    <location>
        <begin position="17"/>
        <end position="449"/>
    </location>
</feature>
<dbReference type="EMBL" id="CR858308">
    <property type="protein sequence ID" value="CAH90545.1"/>
    <property type="molecule type" value="mRNA"/>
</dbReference>
<dbReference type="EMBL" id="CR858947">
    <property type="protein sequence ID" value="CAH91145.1"/>
    <property type="molecule type" value="mRNA"/>
</dbReference>
<dbReference type="RefSeq" id="NP_001125289.1">
    <property type="nucleotide sequence ID" value="NM_001131817.1"/>
</dbReference>
<dbReference type="SMR" id="Q5RAR5"/>
<dbReference type="FunCoup" id="Q5RAR5">
    <property type="interactions" value="1353"/>
</dbReference>
<dbReference type="STRING" id="9601.ENSPPYP00000019155"/>
<dbReference type="GeneID" id="100172187"/>
<dbReference type="KEGG" id="pon:100172187"/>
<dbReference type="CTD" id="55005"/>
<dbReference type="eggNOG" id="KOG2861">
    <property type="taxonomic scope" value="Eukaryota"/>
</dbReference>
<dbReference type="InParanoid" id="Q5RAR5"/>
<dbReference type="OrthoDB" id="242766at2759"/>
<dbReference type="Proteomes" id="UP000001595">
    <property type="component" value="Unplaced"/>
</dbReference>
<dbReference type="GO" id="GO:0005739">
    <property type="term" value="C:mitochondrion"/>
    <property type="evidence" value="ECO:0000250"/>
    <property type="project" value="UniProtKB"/>
</dbReference>
<dbReference type="GO" id="GO:0070131">
    <property type="term" value="P:positive regulation of mitochondrial translation"/>
    <property type="evidence" value="ECO:0000250"/>
    <property type="project" value="UniProtKB"/>
</dbReference>
<dbReference type="GO" id="GO:0006412">
    <property type="term" value="P:translation"/>
    <property type="evidence" value="ECO:0007669"/>
    <property type="project" value="UniProtKB-KW"/>
</dbReference>
<dbReference type="InterPro" id="IPR003734">
    <property type="entry name" value="DUF155"/>
</dbReference>
<dbReference type="InterPro" id="IPR051624">
    <property type="entry name" value="RMD1/Sad1-interacting"/>
</dbReference>
<dbReference type="PANTHER" id="PTHR16255">
    <property type="entry name" value="REQUIRED FOR MEIOTIC NUCLEAR DIVISION PROTEIN 1 HOMOLOG"/>
    <property type="match status" value="1"/>
</dbReference>
<dbReference type="PANTHER" id="PTHR16255:SF1">
    <property type="entry name" value="REQUIRED FOR MEIOTIC NUCLEAR DIVISION PROTEIN 1 HOMOLOG"/>
    <property type="match status" value="1"/>
</dbReference>
<dbReference type="Pfam" id="PF02582">
    <property type="entry name" value="DUF155"/>
    <property type="match status" value="1"/>
</dbReference>